<keyword id="KW-0687">Ribonucleoprotein</keyword>
<keyword id="KW-0689">Ribosomal protein</keyword>
<organism>
    <name type="scientific">Mannheimia succiniciproducens (strain KCTC 0769BP / MBEL55E)</name>
    <dbReference type="NCBI Taxonomy" id="221988"/>
    <lineage>
        <taxon>Bacteria</taxon>
        <taxon>Pseudomonadati</taxon>
        <taxon>Pseudomonadota</taxon>
        <taxon>Gammaproteobacteria</taxon>
        <taxon>Pasteurellales</taxon>
        <taxon>Pasteurellaceae</taxon>
        <taxon>Basfia</taxon>
    </lineage>
</organism>
<protein>
    <recommendedName>
        <fullName evidence="1">Small ribosomal subunit protein uS2</fullName>
    </recommendedName>
    <alternativeName>
        <fullName evidence="2">30S ribosomal protein S2</fullName>
    </alternativeName>
</protein>
<feature type="chain" id="PRO_0000134193" description="Small ribosomal subunit protein uS2">
    <location>
        <begin position="1"/>
        <end position="242"/>
    </location>
</feature>
<proteinExistence type="inferred from homology"/>
<dbReference type="EMBL" id="AE016827">
    <property type="protein sequence ID" value="AAU38540.1"/>
    <property type="status" value="ALT_INIT"/>
    <property type="molecule type" value="Genomic_DNA"/>
</dbReference>
<dbReference type="RefSeq" id="WP_011201093.1">
    <property type="nucleotide sequence ID" value="NC_006300.1"/>
</dbReference>
<dbReference type="SMR" id="Q65R70"/>
<dbReference type="STRING" id="221988.MS1933"/>
<dbReference type="KEGG" id="msu:MS1933"/>
<dbReference type="eggNOG" id="COG0052">
    <property type="taxonomic scope" value="Bacteria"/>
</dbReference>
<dbReference type="HOGENOM" id="CLU_040318_1_2_6"/>
<dbReference type="OrthoDB" id="9808036at2"/>
<dbReference type="Proteomes" id="UP000000607">
    <property type="component" value="Chromosome"/>
</dbReference>
<dbReference type="GO" id="GO:0022627">
    <property type="term" value="C:cytosolic small ribosomal subunit"/>
    <property type="evidence" value="ECO:0007669"/>
    <property type="project" value="TreeGrafter"/>
</dbReference>
<dbReference type="GO" id="GO:0003735">
    <property type="term" value="F:structural constituent of ribosome"/>
    <property type="evidence" value="ECO:0007669"/>
    <property type="project" value="InterPro"/>
</dbReference>
<dbReference type="GO" id="GO:0006412">
    <property type="term" value="P:translation"/>
    <property type="evidence" value="ECO:0007669"/>
    <property type="project" value="UniProtKB-UniRule"/>
</dbReference>
<dbReference type="CDD" id="cd01425">
    <property type="entry name" value="RPS2"/>
    <property type="match status" value="1"/>
</dbReference>
<dbReference type="FunFam" id="1.10.287.610:FF:000001">
    <property type="entry name" value="30S ribosomal protein S2"/>
    <property type="match status" value="1"/>
</dbReference>
<dbReference type="Gene3D" id="3.40.50.10490">
    <property type="entry name" value="Glucose-6-phosphate isomerase like protein, domain 1"/>
    <property type="match status" value="1"/>
</dbReference>
<dbReference type="Gene3D" id="1.10.287.610">
    <property type="entry name" value="Helix hairpin bin"/>
    <property type="match status" value="1"/>
</dbReference>
<dbReference type="HAMAP" id="MF_00291_B">
    <property type="entry name" value="Ribosomal_uS2_B"/>
    <property type="match status" value="1"/>
</dbReference>
<dbReference type="InterPro" id="IPR001865">
    <property type="entry name" value="Ribosomal_uS2"/>
</dbReference>
<dbReference type="InterPro" id="IPR005706">
    <property type="entry name" value="Ribosomal_uS2_bac/mit/plastid"/>
</dbReference>
<dbReference type="InterPro" id="IPR018130">
    <property type="entry name" value="Ribosomal_uS2_CS"/>
</dbReference>
<dbReference type="InterPro" id="IPR023591">
    <property type="entry name" value="Ribosomal_uS2_flav_dom_sf"/>
</dbReference>
<dbReference type="NCBIfam" id="TIGR01011">
    <property type="entry name" value="rpsB_bact"/>
    <property type="match status" value="1"/>
</dbReference>
<dbReference type="PANTHER" id="PTHR12534">
    <property type="entry name" value="30S RIBOSOMAL PROTEIN S2 PROKARYOTIC AND ORGANELLAR"/>
    <property type="match status" value="1"/>
</dbReference>
<dbReference type="PANTHER" id="PTHR12534:SF0">
    <property type="entry name" value="SMALL RIBOSOMAL SUBUNIT PROTEIN US2M"/>
    <property type="match status" value="1"/>
</dbReference>
<dbReference type="Pfam" id="PF00318">
    <property type="entry name" value="Ribosomal_S2"/>
    <property type="match status" value="1"/>
</dbReference>
<dbReference type="PRINTS" id="PR00395">
    <property type="entry name" value="RIBOSOMALS2"/>
</dbReference>
<dbReference type="SUPFAM" id="SSF52313">
    <property type="entry name" value="Ribosomal protein S2"/>
    <property type="match status" value="1"/>
</dbReference>
<dbReference type="PROSITE" id="PS00962">
    <property type="entry name" value="RIBOSOMAL_S2_1"/>
    <property type="match status" value="1"/>
</dbReference>
<dbReference type="PROSITE" id="PS00963">
    <property type="entry name" value="RIBOSOMAL_S2_2"/>
    <property type="match status" value="1"/>
</dbReference>
<gene>
    <name evidence="1" type="primary">rpsB</name>
    <name type="ordered locus">MS1933</name>
</gene>
<comment type="similarity">
    <text evidence="1">Belongs to the universal ribosomal protein uS2 family.</text>
</comment>
<comment type="sequence caution" evidence="2">
    <conflict type="erroneous initiation">
        <sequence resource="EMBL-CDS" id="AAU38540"/>
    </conflict>
</comment>
<reference key="1">
    <citation type="journal article" date="2004" name="Nat. Biotechnol.">
        <title>The genome sequence of the capnophilic rumen bacterium Mannheimia succiniciproducens.</title>
        <authorList>
            <person name="Hong S.H."/>
            <person name="Kim J.S."/>
            <person name="Lee S.Y."/>
            <person name="In Y.H."/>
            <person name="Choi S.S."/>
            <person name="Rih J.-K."/>
            <person name="Kim C.H."/>
            <person name="Jeong H."/>
            <person name="Hur C.G."/>
            <person name="Kim J.J."/>
        </authorList>
    </citation>
    <scope>NUCLEOTIDE SEQUENCE [LARGE SCALE GENOMIC DNA]</scope>
    <source>
        <strain>KCTC 0769BP / MBEL55E</strain>
    </source>
</reference>
<accession>Q65R70</accession>
<name>RS2_MANSM</name>
<sequence>MAQVSMRDMLQAGVHFGHQTRYWNPKMKPFIYGPRNGVHIINLEKTVPMFNGALAELTRIASNNGKILFVGTKRAATEAVQAAALDCQQYYVNHRWLGGMLTNWKTVRQSIKRLKDLETQSQDGTFDKLTKKEALVRTREMEKLELSLGGIKDMAGLPDAIFVIGADYEHIAIKEANNLGIPVFAVVDTNSNPDGIDFVIPGNDDATRAIQLYVTAAAAAVKEGRSQQTATEEKFAEEVAAE</sequence>
<evidence type="ECO:0000255" key="1">
    <source>
        <dbReference type="HAMAP-Rule" id="MF_00291"/>
    </source>
</evidence>
<evidence type="ECO:0000305" key="2"/>